<protein>
    <recommendedName>
        <fullName>Hemocyanin subunit Ia</fullName>
    </recommendedName>
</protein>
<accession>P82310</accession>
<name>HCYIA_PANJA</name>
<dbReference type="PIR" id="S00492">
    <property type="entry name" value="S00492"/>
</dbReference>
<dbReference type="GO" id="GO:0005576">
    <property type="term" value="C:extracellular region"/>
    <property type="evidence" value="ECO:0007669"/>
    <property type="project" value="UniProtKB-SubCell"/>
</dbReference>
<dbReference type="GO" id="GO:0005344">
    <property type="term" value="F:oxygen carrier activity"/>
    <property type="evidence" value="ECO:0007669"/>
    <property type="project" value="UniProtKB-KW"/>
</dbReference>
<evidence type="ECO:0000256" key="1">
    <source>
        <dbReference type="SAM" id="MobiDB-lite"/>
    </source>
</evidence>
<evidence type="ECO:0000305" key="2"/>
<organism evidence="2">
    <name type="scientific">Panulirus japonicus</name>
    <name type="common">Japanese spiny lobster</name>
    <name type="synonym">Palinurus japonicus</name>
    <dbReference type="NCBI Taxonomy" id="6736"/>
    <lineage>
        <taxon>Eukaryota</taxon>
        <taxon>Metazoa</taxon>
        <taxon>Ecdysozoa</taxon>
        <taxon>Arthropoda</taxon>
        <taxon>Crustacea</taxon>
        <taxon>Multicrustacea</taxon>
        <taxon>Malacostraca</taxon>
        <taxon>Eumalacostraca</taxon>
        <taxon>Eucarida</taxon>
        <taxon>Decapoda</taxon>
        <taxon>Pleocyemata</taxon>
        <taxon>Achelata</taxon>
        <taxon>Palinuroidea</taxon>
        <taxon>Palinuridae</taxon>
        <taxon>Panulirus</taxon>
    </lineage>
</organism>
<reference evidence="2" key="1">
    <citation type="journal article" date="1988" name="Eur. J. Biochem.">
        <title>Subunits of Panulirus japonicus hemocyanin. 1. Isolation and properties.</title>
        <authorList>
            <person name="Makino N."/>
            <person name="Kimura S."/>
        </authorList>
    </citation>
    <scope>PROTEIN SEQUENCE</scope>
    <source>
        <tissue>Serum</tissue>
    </source>
</reference>
<feature type="chain" id="PRO_0000204294" description="Hemocyanin subunit Ia">
    <location>
        <begin position="1"/>
        <end position="20" status="greater than"/>
    </location>
</feature>
<feature type="region of interest" description="Disordered" evidence="1">
    <location>
        <begin position="1"/>
        <end position="20"/>
    </location>
</feature>
<feature type="non-terminal residue" evidence="2">
    <location>
        <position position="20"/>
    </location>
</feature>
<sequence>ADXQPGDSTDKLLAQKQDDV</sequence>
<proteinExistence type="evidence at protein level"/>
<keyword id="KW-0186">Copper</keyword>
<keyword id="KW-0903">Direct protein sequencing</keyword>
<keyword id="KW-0561">Oxygen transport</keyword>
<keyword id="KW-0964">Secreted</keyword>
<keyword id="KW-0813">Transport</keyword>
<comment type="function">
    <text>Hemocyanins are copper-containing oxygen carriers occurring freely dissolved in the hemolymph of many mollusks and arthropods.</text>
</comment>
<comment type="subunit">
    <text>Composed of 3 major subunits (IB, II and III) and 1 minor subunit (IA) which form homohexamers and heterohexamers. May also form larger structures.</text>
</comment>
<comment type="subcellular location">
    <subcellularLocation>
        <location>Secreted</location>
        <location>Extracellular space</location>
    </subcellularLocation>
</comment>
<comment type="tissue specificity">
    <text>Hemolymph.</text>
</comment>
<comment type="similarity">
    <text evidence="2">Belongs to the tyrosinase family. Hemocyanin subfamily.</text>
</comment>